<reference key="1">
    <citation type="journal article" date="1998" name="J. Biol. Chem.">
        <title>Growth regulation of the expression of mouse cDNA and gene encoding a serine/threonine kinase related to Saccharomyces cerevisiae CDC7 essential for G1/S transition. Structure, chromosomal localization, and expression of mouse gene for s. cerevisiae Cdc7-related kinase.</title>
        <authorList>
            <person name="Kim J."/>
            <person name="Sato N."/>
            <person name="Yamada M."/>
            <person name="Arai K."/>
            <person name="Masai H."/>
        </authorList>
    </citation>
    <scope>NUCLEOTIDE SEQUENCE [GENOMIC DNA / MRNA] (ISOFORMS 1 AND 2)</scope>
    <source>
        <tissue>Liver</tissue>
    </source>
</reference>
<reference key="2">
    <citation type="journal article" date="1999" name="Chromosoma">
        <title>Identification and characterization of mouse homologue to yeast Cdc7 protein and chromosomal localization of the cognate mouse gene Cdc7l.</title>
        <authorList>
            <person name="Faul T."/>
            <person name="Staib C."/>
            <person name="Nanda I."/>
            <person name="Schmid M."/>
            <person name="Grummt F."/>
        </authorList>
    </citation>
    <scope>NUCLEOTIDE SEQUENCE [MRNA] (ISOFORM 1)</scope>
</reference>
<reference key="3">
    <citation type="journal article" date="2005" name="Science">
        <title>The transcriptional landscape of the mammalian genome.</title>
        <authorList>
            <person name="Carninci P."/>
            <person name="Kasukawa T."/>
            <person name="Katayama S."/>
            <person name="Gough J."/>
            <person name="Frith M.C."/>
            <person name="Maeda N."/>
            <person name="Oyama R."/>
            <person name="Ravasi T."/>
            <person name="Lenhard B."/>
            <person name="Wells C."/>
            <person name="Kodzius R."/>
            <person name="Shimokawa K."/>
            <person name="Bajic V.B."/>
            <person name="Brenner S.E."/>
            <person name="Batalov S."/>
            <person name="Forrest A.R."/>
            <person name="Zavolan M."/>
            <person name="Davis M.J."/>
            <person name="Wilming L.G."/>
            <person name="Aidinis V."/>
            <person name="Allen J.E."/>
            <person name="Ambesi-Impiombato A."/>
            <person name="Apweiler R."/>
            <person name="Aturaliya R.N."/>
            <person name="Bailey T.L."/>
            <person name="Bansal M."/>
            <person name="Baxter L."/>
            <person name="Beisel K.W."/>
            <person name="Bersano T."/>
            <person name="Bono H."/>
            <person name="Chalk A.M."/>
            <person name="Chiu K.P."/>
            <person name="Choudhary V."/>
            <person name="Christoffels A."/>
            <person name="Clutterbuck D.R."/>
            <person name="Crowe M.L."/>
            <person name="Dalla E."/>
            <person name="Dalrymple B.P."/>
            <person name="de Bono B."/>
            <person name="Della Gatta G."/>
            <person name="di Bernardo D."/>
            <person name="Down T."/>
            <person name="Engstrom P."/>
            <person name="Fagiolini M."/>
            <person name="Faulkner G."/>
            <person name="Fletcher C.F."/>
            <person name="Fukushima T."/>
            <person name="Furuno M."/>
            <person name="Futaki S."/>
            <person name="Gariboldi M."/>
            <person name="Georgii-Hemming P."/>
            <person name="Gingeras T.R."/>
            <person name="Gojobori T."/>
            <person name="Green R.E."/>
            <person name="Gustincich S."/>
            <person name="Harbers M."/>
            <person name="Hayashi Y."/>
            <person name="Hensch T.K."/>
            <person name="Hirokawa N."/>
            <person name="Hill D."/>
            <person name="Huminiecki L."/>
            <person name="Iacono M."/>
            <person name="Ikeo K."/>
            <person name="Iwama A."/>
            <person name="Ishikawa T."/>
            <person name="Jakt M."/>
            <person name="Kanapin A."/>
            <person name="Katoh M."/>
            <person name="Kawasawa Y."/>
            <person name="Kelso J."/>
            <person name="Kitamura H."/>
            <person name="Kitano H."/>
            <person name="Kollias G."/>
            <person name="Krishnan S.P."/>
            <person name="Kruger A."/>
            <person name="Kummerfeld S.K."/>
            <person name="Kurochkin I.V."/>
            <person name="Lareau L.F."/>
            <person name="Lazarevic D."/>
            <person name="Lipovich L."/>
            <person name="Liu J."/>
            <person name="Liuni S."/>
            <person name="McWilliam S."/>
            <person name="Madan Babu M."/>
            <person name="Madera M."/>
            <person name="Marchionni L."/>
            <person name="Matsuda H."/>
            <person name="Matsuzawa S."/>
            <person name="Miki H."/>
            <person name="Mignone F."/>
            <person name="Miyake S."/>
            <person name="Morris K."/>
            <person name="Mottagui-Tabar S."/>
            <person name="Mulder N."/>
            <person name="Nakano N."/>
            <person name="Nakauchi H."/>
            <person name="Ng P."/>
            <person name="Nilsson R."/>
            <person name="Nishiguchi S."/>
            <person name="Nishikawa S."/>
            <person name="Nori F."/>
            <person name="Ohara O."/>
            <person name="Okazaki Y."/>
            <person name="Orlando V."/>
            <person name="Pang K.C."/>
            <person name="Pavan W.J."/>
            <person name="Pavesi G."/>
            <person name="Pesole G."/>
            <person name="Petrovsky N."/>
            <person name="Piazza S."/>
            <person name="Reed J."/>
            <person name="Reid J.F."/>
            <person name="Ring B.Z."/>
            <person name="Ringwald M."/>
            <person name="Rost B."/>
            <person name="Ruan Y."/>
            <person name="Salzberg S.L."/>
            <person name="Sandelin A."/>
            <person name="Schneider C."/>
            <person name="Schoenbach C."/>
            <person name="Sekiguchi K."/>
            <person name="Semple C.A."/>
            <person name="Seno S."/>
            <person name="Sessa L."/>
            <person name="Sheng Y."/>
            <person name="Shibata Y."/>
            <person name="Shimada H."/>
            <person name="Shimada K."/>
            <person name="Silva D."/>
            <person name="Sinclair B."/>
            <person name="Sperling S."/>
            <person name="Stupka E."/>
            <person name="Sugiura K."/>
            <person name="Sultana R."/>
            <person name="Takenaka Y."/>
            <person name="Taki K."/>
            <person name="Tammoja K."/>
            <person name="Tan S.L."/>
            <person name="Tang S."/>
            <person name="Taylor M.S."/>
            <person name="Tegner J."/>
            <person name="Teichmann S.A."/>
            <person name="Ueda H.R."/>
            <person name="van Nimwegen E."/>
            <person name="Verardo R."/>
            <person name="Wei C.L."/>
            <person name="Yagi K."/>
            <person name="Yamanishi H."/>
            <person name="Zabarovsky E."/>
            <person name="Zhu S."/>
            <person name="Zimmer A."/>
            <person name="Hide W."/>
            <person name="Bult C."/>
            <person name="Grimmond S.M."/>
            <person name="Teasdale R.D."/>
            <person name="Liu E.T."/>
            <person name="Brusic V."/>
            <person name="Quackenbush J."/>
            <person name="Wahlestedt C."/>
            <person name="Mattick J.S."/>
            <person name="Hume D.A."/>
            <person name="Kai C."/>
            <person name="Sasaki D."/>
            <person name="Tomaru Y."/>
            <person name="Fukuda S."/>
            <person name="Kanamori-Katayama M."/>
            <person name="Suzuki M."/>
            <person name="Aoki J."/>
            <person name="Arakawa T."/>
            <person name="Iida J."/>
            <person name="Imamura K."/>
            <person name="Itoh M."/>
            <person name="Kato T."/>
            <person name="Kawaji H."/>
            <person name="Kawagashira N."/>
            <person name="Kawashima T."/>
            <person name="Kojima M."/>
            <person name="Kondo S."/>
            <person name="Konno H."/>
            <person name="Nakano K."/>
            <person name="Ninomiya N."/>
            <person name="Nishio T."/>
            <person name="Okada M."/>
            <person name="Plessy C."/>
            <person name="Shibata K."/>
            <person name="Shiraki T."/>
            <person name="Suzuki S."/>
            <person name="Tagami M."/>
            <person name="Waki K."/>
            <person name="Watahiki A."/>
            <person name="Okamura-Oho Y."/>
            <person name="Suzuki H."/>
            <person name="Kawai J."/>
            <person name="Hayashizaki Y."/>
        </authorList>
    </citation>
    <scope>NUCLEOTIDE SEQUENCE [LARGE SCALE MRNA] (ISOFORM 1)</scope>
    <source>
        <strain>C57BL/6J</strain>
        <tissue>Placenta</tissue>
    </source>
</reference>
<reference key="4">
    <citation type="submission" date="2005-09" db="EMBL/GenBank/DDBJ databases">
        <authorList>
            <person name="Mural R.J."/>
            <person name="Adams M.D."/>
            <person name="Myers E.W."/>
            <person name="Smith H.O."/>
            <person name="Venter J.C."/>
        </authorList>
    </citation>
    <scope>NUCLEOTIDE SEQUENCE [LARGE SCALE GENOMIC DNA]</scope>
</reference>
<reference key="5">
    <citation type="journal article" date="2004" name="Genome Res.">
        <title>The status, quality, and expansion of the NIH full-length cDNA project: the Mammalian Gene Collection (MGC).</title>
        <authorList>
            <consortium name="The MGC Project Team"/>
        </authorList>
    </citation>
    <scope>NUCLEOTIDE SEQUENCE [LARGE SCALE MRNA] (ISOFORM 1)</scope>
    <source>
        <strain>C57BL/6J</strain>
        <tissue>Eye</tissue>
    </source>
</reference>
<reference key="6">
    <citation type="journal article" date="1999" name="Mol. Gen. Genet.">
        <title>Identification, characterization and chromosomal localization of the cognate human and murine DBF4 genes.</title>
        <authorList>
            <person name="Lepke M."/>
            <person name="Puetter V."/>
            <person name="Staib C."/>
            <person name="Kneissl M."/>
            <person name="Berger C."/>
            <person name="Hoehn K."/>
            <person name="Nanda I."/>
            <person name="Schmid M."/>
            <person name="Grummt F."/>
        </authorList>
    </citation>
    <scope>INTERACTION WITH DBF4</scope>
    <source>
        <strain>C57BL/6J</strain>
        <tissue>Egg</tissue>
        <tissue>Embryo</tissue>
    </source>
</reference>
<sequence>MEEPMAFSSLRGSDRCPADDSLKKYEQSVKLSGIKRDIEELCEAVPQLVNVFKIKDKIGEGTFSSVYLATAQLQEGHEEKIALKHLIPTSHPMRIAAELQCLTVAGGQDNVMGLKYCFRKNDHVVIAMPYLEHESFLDILNSLSFQEVREYMYNLFVALKRIHQFGIVHRDVKPSNFLYNRRLKKYALVDFGLAQGTRDTKIELLKFVQSEAQQEDCSRNKYHGVVGHKGLLSRPAPKTVDQQCTPKTSVKRSYTQVHIKQGKDGKERSVGLSVQRSVFGERNFNIHSSISHESPAEKLIKQSKTVDIISRKLATKKTAISTKAMNSVMRETARSCPAVLTCDCYGSDRVCSVCLSRRQQVAPRAGTPGFRAPEVLTKCPDQTTAIDMWSAGVIFLSLLSGRYPFYKASDDLTALAQIMTIRGSRETIQAAKAFGKSVLCSKEVPAQDLRALCERLRGLDSTTPRSASGPPGNASYDPAASKNTDHKASRVQAAQAQHSEDSLYKRDNDGYWSHPKDCTSNSEGWDSVPDEAYDLLDKLLDLNPASRITAEAALLHAFFKDMCS</sequence>
<keyword id="KW-0025">Alternative splicing</keyword>
<keyword id="KW-0067">ATP-binding</keyword>
<keyword id="KW-0131">Cell cycle</keyword>
<keyword id="KW-0132">Cell division</keyword>
<keyword id="KW-1017">Isopeptide bond</keyword>
<keyword id="KW-0418">Kinase</keyword>
<keyword id="KW-0460">Magnesium</keyword>
<keyword id="KW-0479">Metal-binding</keyword>
<keyword id="KW-0547">Nucleotide-binding</keyword>
<keyword id="KW-0539">Nucleus</keyword>
<keyword id="KW-0597">Phosphoprotein</keyword>
<keyword id="KW-1185">Reference proteome</keyword>
<keyword id="KW-0723">Serine/threonine-protein kinase</keyword>
<keyword id="KW-0808">Transferase</keyword>
<keyword id="KW-0832">Ubl conjugation</keyword>
<dbReference type="EC" id="2.7.11.1"/>
<dbReference type="EMBL" id="AB019388">
    <property type="protein sequence ID" value="BAA34347.1"/>
    <property type="molecule type" value="Genomic_DNA"/>
</dbReference>
<dbReference type="EMBL" id="AB018575">
    <property type="protein sequence ID" value="BAA33881.1"/>
    <property type="molecule type" value="mRNA"/>
</dbReference>
<dbReference type="EMBL" id="AB018574">
    <property type="protein sequence ID" value="BAA33880.1"/>
    <property type="molecule type" value="mRNA"/>
</dbReference>
<dbReference type="EMBL" id="AJ007661">
    <property type="protein sequence ID" value="CAB40539.1"/>
    <property type="molecule type" value="mRNA"/>
</dbReference>
<dbReference type="EMBL" id="AK145921">
    <property type="protein sequence ID" value="BAE26752.1"/>
    <property type="molecule type" value="mRNA"/>
</dbReference>
<dbReference type="EMBL" id="CH466529">
    <property type="protein sequence ID" value="EDL20174.1"/>
    <property type="molecule type" value="Genomic_DNA"/>
</dbReference>
<dbReference type="EMBL" id="BC072666">
    <property type="protein sequence ID" value="AAH72666.1"/>
    <property type="molecule type" value="mRNA"/>
</dbReference>
<dbReference type="CCDS" id="CCDS19498.1">
    <molecule id="Q9Z0H0-1"/>
</dbReference>
<dbReference type="CCDS" id="CCDS71628.1">
    <molecule id="Q9Z0H0-2"/>
</dbReference>
<dbReference type="RefSeq" id="NP_001258495.1">
    <molecule id="Q9Z0H0-1"/>
    <property type="nucleotide sequence ID" value="NM_001271566.2"/>
</dbReference>
<dbReference type="RefSeq" id="NP_001258496.1">
    <molecule id="Q9Z0H0-2"/>
    <property type="nucleotide sequence ID" value="NM_001271567.2"/>
</dbReference>
<dbReference type="RefSeq" id="NP_001258497.1">
    <property type="nucleotide sequence ID" value="NM_001271568.1"/>
</dbReference>
<dbReference type="RefSeq" id="NP_001407653.1">
    <molecule id="Q9Z0H0-2"/>
    <property type="nucleotide sequence ID" value="NM_001420724.1"/>
</dbReference>
<dbReference type="RefSeq" id="NP_033993.2">
    <molecule id="Q9Z0H0-1"/>
    <property type="nucleotide sequence ID" value="NM_009863.4"/>
</dbReference>
<dbReference type="SMR" id="Q9Z0H0"/>
<dbReference type="BioGRID" id="198629">
    <property type="interactions" value="7"/>
</dbReference>
<dbReference type="FunCoup" id="Q9Z0H0">
    <property type="interactions" value="2442"/>
</dbReference>
<dbReference type="IntAct" id="Q9Z0H0">
    <property type="interactions" value="1"/>
</dbReference>
<dbReference type="MINT" id="Q9Z0H0"/>
<dbReference type="STRING" id="10090.ENSMUSP00000113385"/>
<dbReference type="GlyGen" id="Q9Z0H0">
    <property type="glycosylation" value="1 site"/>
</dbReference>
<dbReference type="iPTMnet" id="Q9Z0H0"/>
<dbReference type="PhosphoSitePlus" id="Q9Z0H0"/>
<dbReference type="PaxDb" id="10090-ENSMUSP00000031221"/>
<dbReference type="ProteomicsDB" id="281514">
    <molecule id="Q9Z0H0-1"/>
</dbReference>
<dbReference type="ProteomicsDB" id="281515">
    <molecule id="Q9Z0H0-2"/>
</dbReference>
<dbReference type="Antibodypedia" id="3628">
    <property type="antibodies" value="314 antibodies from 36 providers"/>
</dbReference>
<dbReference type="DNASU" id="12545"/>
<dbReference type="Ensembl" id="ENSMUST00000031221.12">
    <molecule id="Q9Z0H0-1"/>
    <property type="protein sequence ID" value="ENSMUSP00000031221.6"/>
    <property type="gene ID" value="ENSMUSG00000029283.18"/>
</dbReference>
<dbReference type="Ensembl" id="ENSMUST00000117196.9">
    <molecule id="Q9Z0H0-2"/>
    <property type="protein sequence ID" value="ENSMUSP00000112392.3"/>
    <property type="gene ID" value="ENSMUSG00000029283.18"/>
</dbReference>
<dbReference type="Ensembl" id="ENSMUST00000118261.8">
    <molecule id="Q9Z0H0-1"/>
    <property type="protein sequence ID" value="ENSMUSP00000113385.2"/>
    <property type="gene ID" value="ENSMUSG00000029283.18"/>
</dbReference>
<dbReference type="GeneID" id="12545"/>
<dbReference type="KEGG" id="mmu:12545"/>
<dbReference type="UCSC" id="uc008ylw.2">
    <molecule id="Q9Z0H0-1"/>
    <property type="organism name" value="mouse"/>
</dbReference>
<dbReference type="UCSC" id="uc008ylx.2">
    <molecule id="Q9Z0H0-2"/>
    <property type="organism name" value="mouse"/>
</dbReference>
<dbReference type="AGR" id="MGI:1309511"/>
<dbReference type="CTD" id="8317"/>
<dbReference type="MGI" id="MGI:1309511">
    <property type="gene designation" value="Cdc7"/>
</dbReference>
<dbReference type="VEuPathDB" id="HostDB:ENSMUSG00000029283"/>
<dbReference type="eggNOG" id="KOG1167">
    <property type="taxonomic scope" value="Eukaryota"/>
</dbReference>
<dbReference type="GeneTree" id="ENSGT00550000075011"/>
<dbReference type="HOGENOM" id="CLU_000288_118_1_1"/>
<dbReference type="InParanoid" id="Q9Z0H0"/>
<dbReference type="OMA" id="CLRFRHR"/>
<dbReference type="OrthoDB" id="10020333at2759"/>
<dbReference type="PhylomeDB" id="Q9Z0H0"/>
<dbReference type="TreeFam" id="TF101052"/>
<dbReference type="BRENDA" id="2.7.11.1">
    <property type="organism ID" value="3474"/>
</dbReference>
<dbReference type="Reactome" id="R-MMU-176187">
    <property type="pathway name" value="Activation of ATR in response to replication stress"/>
</dbReference>
<dbReference type="Reactome" id="R-MMU-68962">
    <property type="pathway name" value="Activation of the pre-replicative complex"/>
</dbReference>
<dbReference type="BioGRID-ORCS" id="12545">
    <property type="hits" value="22 hits in 120 CRISPR screens"/>
</dbReference>
<dbReference type="PRO" id="PR:Q9Z0H0"/>
<dbReference type="Proteomes" id="UP000000589">
    <property type="component" value="Chromosome 5"/>
</dbReference>
<dbReference type="RNAct" id="Q9Z0H0">
    <property type="molecule type" value="protein"/>
</dbReference>
<dbReference type="Bgee" id="ENSMUSG00000029283">
    <property type="expression patterns" value="Expressed in otic placode and 251 other cell types or tissues"/>
</dbReference>
<dbReference type="ExpressionAtlas" id="Q9Z0H0">
    <property type="expression patterns" value="baseline and differential"/>
</dbReference>
<dbReference type="GO" id="GO:0005737">
    <property type="term" value="C:cytoplasm"/>
    <property type="evidence" value="ECO:0007669"/>
    <property type="project" value="Ensembl"/>
</dbReference>
<dbReference type="GO" id="GO:0045171">
    <property type="term" value="C:intercellular bridge"/>
    <property type="evidence" value="ECO:0007669"/>
    <property type="project" value="Ensembl"/>
</dbReference>
<dbReference type="GO" id="GO:0072686">
    <property type="term" value="C:mitotic spindle"/>
    <property type="evidence" value="ECO:0007669"/>
    <property type="project" value="Ensembl"/>
</dbReference>
<dbReference type="GO" id="GO:0005654">
    <property type="term" value="C:nucleoplasm"/>
    <property type="evidence" value="ECO:0007669"/>
    <property type="project" value="Ensembl"/>
</dbReference>
<dbReference type="GO" id="GO:0005524">
    <property type="term" value="F:ATP binding"/>
    <property type="evidence" value="ECO:0007669"/>
    <property type="project" value="UniProtKB-KW"/>
</dbReference>
<dbReference type="GO" id="GO:0046872">
    <property type="term" value="F:metal ion binding"/>
    <property type="evidence" value="ECO:0007669"/>
    <property type="project" value="UniProtKB-KW"/>
</dbReference>
<dbReference type="GO" id="GO:0106310">
    <property type="term" value="F:protein serine kinase activity"/>
    <property type="evidence" value="ECO:0007669"/>
    <property type="project" value="RHEA"/>
</dbReference>
<dbReference type="GO" id="GO:0004674">
    <property type="term" value="F:protein serine/threonine kinase activity"/>
    <property type="evidence" value="ECO:0007669"/>
    <property type="project" value="UniProtKB-KW"/>
</dbReference>
<dbReference type="GO" id="GO:0044770">
    <property type="term" value="P:cell cycle phase transition"/>
    <property type="evidence" value="ECO:0007669"/>
    <property type="project" value="Ensembl"/>
</dbReference>
<dbReference type="GO" id="GO:0051301">
    <property type="term" value="P:cell division"/>
    <property type="evidence" value="ECO:0007669"/>
    <property type="project" value="UniProtKB-KW"/>
</dbReference>
<dbReference type="GO" id="GO:0008284">
    <property type="term" value="P:positive regulation of cell population proliferation"/>
    <property type="evidence" value="ECO:0007669"/>
    <property type="project" value="Ensembl"/>
</dbReference>
<dbReference type="GO" id="GO:0010971">
    <property type="term" value="P:positive regulation of G2/M transition of mitotic cell cycle"/>
    <property type="evidence" value="ECO:0007669"/>
    <property type="project" value="Ensembl"/>
</dbReference>
<dbReference type="GO" id="GO:0010571">
    <property type="term" value="P:positive regulation of nuclear cell cycle DNA replication"/>
    <property type="evidence" value="ECO:0007669"/>
    <property type="project" value="Ensembl"/>
</dbReference>
<dbReference type="CDD" id="cd14019">
    <property type="entry name" value="STKc_Cdc7"/>
    <property type="match status" value="1"/>
</dbReference>
<dbReference type="FunFam" id="1.10.510.10:FF:000483">
    <property type="entry name" value="Cell division cycle 7-related protein kinase"/>
    <property type="match status" value="1"/>
</dbReference>
<dbReference type="FunFam" id="3.30.200.20:FF:000287">
    <property type="entry name" value="Cell division cycle 7-related protein kinase"/>
    <property type="match status" value="1"/>
</dbReference>
<dbReference type="Gene3D" id="3.30.200.20">
    <property type="entry name" value="Phosphorylase Kinase, domain 1"/>
    <property type="match status" value="1"/>
</dbReference>
<dbReference type="Gene3D" id="1.10.510.10">
    <property type="entry name" value="Transferase(Phosphotransferase) domain 1"/>
    <property type="match status" value="2"/>
</dbReference>
<dbReference type="InterPro" id="IPR011009">
    <property type="entry name" value="Kinase-like_dom_sf"/>
</dbReference>
<dbReference type="InterPro" id="IPR000719">
    <property type="entry name" value="Prot_kinase_dom"/>
</dbReference>
<dbReference type="InterPro" id="IPR017441">
    <property type="entry name" value="Protein_kinase_ATP_BS"/>
</dbReference>
<dbReference type="InterPro" id="IPR008271">
    <property type="entry name" value="Ser/Thr_kinase_AS"/>
</dbReference>
<dbReference type="PANTHER" id="PTHR44167:SF23">
    <property type="entry name" value="CDC7 KINASE, ISOFORM A-RELATED"/>
    <property type="match status" value="1"/>
</dbReference>
<dbReference type="PANTHER" id="PTHR44167">
    <property type="entry name" value="OVARIAN-SPECIFIC SERINE/THREONINE-PROTEIN KINASE LOK-RELATED"/>
    <property type="match status" value="1"/>
</dbReference>
<dbReference type="Pfam" id="PF00069">
    <property type="entry name" value="Pkinase"/>
    <property type="match status" value="2"/>
</dbReference>
<dbReference type="SMART" id="SM00220">
    <property type="entry name" value="S_TKc"/>
    <property type="match status" value="1"/>
</dbReference>
<dbReference type="SUPFAM" id="SSF56112">
    <property type="entry name" value="Protein kinase-like (PK-like)"/>
    <property type="match status" value="1"/>
</dbReference>
<dbReference type="PROSITE" id="PS00107">
    <property type="entry name" value="PROTEIN_KINASE_ATP"/>
    <property type="match status" value="1"/>
</dbReference>
<dbReference type="PROSITE" id="PS50011">
    <property type="entry name" value="PROTEIN_KINASE_DOM"/>
    <property type="match status" value="1"/>
</dbReference>
<dbReference type="PROSITE" id="PS00108">
    <property type="entry name" value="PROTEIN_KINASE_ST"/>
    <property type="match status" value="1"/>
</dbReference>
<protein>
    <recommendedName>
        <fullName>Cell division cycle 7-related protein kinase</fullName>
        <shortName>CDC7-related kinase</shortName>
        <shortName>muCdc7</shortName>
        <ecNumber>2.7.11.1</ecNumber>
    </recommendedName>
</protein>
<proteinExistence type="evidence at protein level"/>
<feature type="chain" id="PRO_0000085764" description="Cell division cycle 7-related protein kinase">
    <location>
        <begin position="1"/>
        <end position="564"/>
    </location>
</feature>
<feature type="domain" description="Protein kinase" evidence="3">
    <location>
        <begin position="52"/>
        <end position="564"/>
    </location>
</feature>
<feature type="region of interest" description="Disordered" evidence="5">
    <location>
        <begin position="460"/>
        <end position="506"/>
    </location>
</feature>
<feature type="active site" description="Proton acceptor" evidence="3 4">
    <location>
        <position position="171"/>
    </location>
</feature>
<feature type="binding site" evidence="3">
    <location>
        <begin position="58"/>
        <end position="66"/>
    </location>
    <ligand>
        <name>ATP</name>
        <dbReference type="ChEBI" id="CHEBI:30616"/>
    </ligand>
</feature>
<feature type="binding site" evidence="3">
    <location>
        <position position="84"/>
    </location>
    <ligand>
        <name>ATP</name>
        <dbReference type="ChEBI" id="CHEBI:30616"/>
    </ligand>
</feature>
<feature type="modified residue" description="Phosphoserine" evidence="2">
    <location>
        <position position="21"/>
    </location>
</feature>
<feature type="cross-link" description="Glycyl lysine isopeptide (Lys-Gly) (interchain with G-Cter in SUMO2)" evidence="2">
    <location>
        <position position="260"/>
    </location>
</feature>
<feature type="splice variant" id="VSP_004864" description="In isoform 2." evidence="6">
    <location>
        <begin position="267"/>
        <end position="298"/>
    </location>
</feature>
<feature type="sequence conflict" description="In Ref. 1; BAA34347/BAA33881/BAA33880." evidence="7" ref="1">
    <original>I</original>
    <variation>F</variation>
    <location>
        <position position="38"/>
    </location>
</feature>
<feature type="sequence conflict" description="In Ref. 1; BAA34347/BAA33881/BAA33880." evidence="7" ref="1">
    <original>C</original>
    <variation>G</variation>
    <location>
        <position position="42"/>
    </location>
</feature>
<feature type="sequence conflict" description="In Ref. 1; BAA34347/BAA33881/BAA33880." evidence="7" ref="1">
    <original>F</original>
    <variation>S</variation>
    <location>
        <position position="52"/>
    </location>
</feature>
<feature type="sequence conflict" description="In Ref. 1; BAA34347/BAA33881/BAA33880." evidence="7" ref="1">
    <original>D</original>
    <variation>N</variation>
    <location>
        <position position="348"/>
    </location>
</feature>
<feature type="sequence conflict" description="In Ref. 1; BAA34347/BAA33881/BAA33880." evidence="7" ref="1">
    <original>K</original>
    <variation>R</variation>
    <location>
        <position position="516"/>
    </location>
</feature>
<feature type="sequence conflict" description="In Ref. 1; BAA34347/BAA33881/BAA33880." evidence="7" ref="1">
    <original>A</original>
    <variation>V</variation>
    <location>
        <position position="557"/>
    </location>
</feature>
<name>CDC7_MOUSE</name>
<comment type="function">
    <text evidence="2">Kinase involved in initiation of DNA replication. Phosphorylates critical substrates that regulate the G1/S phase transition and initiation of DNA replication, such as MCM proteins and CLASPIN.</text>
</comment>
<comment type="catalytic activity">
    <reaction evidence="2">
        <text>L-seryl-[protein] + ATP = O-phospho-L-seryl-[protein] + ADP + H(+)</text>
        <dbReference type="Rhea" id="RHEA:17989"/>
        <dbReference type="Rhea" id="RHEA-COMP:9863"/>
        <dbReference type="Rhea" id="RHEA-COMP:11604"/>
        <dbReference type="ChEBI" id="CHEBI:15378"/>
        <dbReference type="ChEBI" id="CHEBI:29999"/>
        <dbReference type="ChEBI" id="CHEBI:30616"/>
        <dbReference type="ChEBI" id="CHEBI:83421"/>
        <dbReference type="ChEBI" id="CHEBI:456216"/>
        <dbReference type="EC" id="2.7.11.1"/>
    </reaction>
    <physiologicalReaction direction="left-to-right" evidence="2">
        <dbReference type="Rhea" id="RHEA:17990"/>
    </physiologicalReaction>
</comment>
<comment type="catalytic activity">
    <reaction evidence="2">
        <text>L-threonyl-[protein] + ATP = O-phospho-L-threonyl-[protein] + ADP + H(+)</text>
        <dbReference type="Rhea" id="RHEA:46608"/>
        <dbReference type="Rhea" id="RHEA-COMP:11060"/>
        <dbReference type="Rhea" id="RHEA-COMP:11605"/>
        <dbReference type="ChEBI" id="CHEBI:15378"/>
        <dbReference type="ChEBI" id="CHEBI:30013"/>
        <dbReference type="ChEBI" id="CHEBI:30616"/>
        <dbReference type="ChEBI" id="CHEBI:61977"/>
        <dbReference type="ChEBI" id="CHEBI:456216"/>
        <dbReference type="EC" id="2.7.11.1"/>
    </reaction>
    <physiologicalReaction direction="left-to-right" evidence="2">
        <dbReference type="Rhea" id="RHEA:46609"/>
    </physiologicalReaction>
</comment>
<comment type="cofactor">
    <cofactor evidence="1">
        <name>Mg(2+)</name>
        <dbReference type="ChEBI" id="CHEBI:18420"/>
    </cofactor>
</comment>
<comment type="subunit">
    <text evidence="2">Forms a complex with either DBF4/DBF4A or DBF4B, leading to the activation of the kinase activity. Interacts with CLASPIN (via the acidic patch); the interaction is required for phosphorylation of MCM proteins and CLASPIN.</text>
</comment>
<comment type="subcellular location">
    <subcellularLocation>
        <location evidence="2">Nucleus</location>
    </subcellularLocation>
</comment>
<comment type="alternative products">
    <event type="alternative splicing"/>
    <isoform>
        <id>Q9Z0H0-1</id>
        <name>1</name>
        <sequence type="displayed"/>
    </isoform>
    <isoform>
        <id>Q9Z0H0-2</id>
        <name>2</name>
        <sequence type="described" ref="VSP_004864"/>
    </isoform>
    <text>Additional isoforms seem to exist.</text>
</comment>
<comment type="similarity">
    <text evidence="3">Belongs to the protein kinase superfamily. Ser/Thr protein kinase family. CDC7 subfamily.</text>
</comment>
<accession>Q9Z0H0</accession>
<accession>Q9WUV1</accession>
<accession>Q9Z2Y7</accession>
<evidence type="ECO:0000250" key="1"/>
<evidence type="ECO:0000250" key="2">
    <source>
        <dbReference type="UniProtKB" id="O00311"/>
    </source>
</evidence>
<evidence type="ECO:0000255" key="3">
    <source>
        <dbReference type="PROSITE-ProRule" id="PRU00159"/>
    </source>
</evidence>
<evidence type="ECO:0000255" key="4">
    <source>
        <dbReference type="PROSITE-ProRule" id="PRU10027"/>
    </source>
</evidence>
<evidence type="ECO:0000256" key="5">
    <source>
        <dbReference type="SAM" id="MobiDB-lite"/>
    </source>
</evidence>
<evidence type="ECO:0000303" key="6">
    <source>
    </source>
</evidence>
<evidence type="ECO:0000305" key="7"/>
<organism>
    <name type="scientific">Mus musculus</name>
    <name type="common">Mouse</name>
    <dbReference type="NCBI Taxonomy" id="10090"/>
    <lineage>
        <taxon>Eukaryota</taxon>
        <taxon>Metazoa</taxon>
        <taxon>Chordata</taxon>
        <taxon>Craniata</taxon>
        <taxon>Vertebrata</taxon>
        <taxon>Euteleostomi</taxon>
        <taxon>Mammalia</taxon>
        <taxon>Eutheria</taxon>
        <taxon>Euarchontoglires</taxon>
        <taxon>Glires</taxon>
        <taxon>Rodentia</taxon>
        <taxon>Myomorpha</taxon>
        <taxon>Muroidea</taxon>
        <taxon>Muridae</taxon>
        <taxon>Murinae</taxon>
        <taxon>Mus</taxon>
        <taxon>Mus</taxon>
    </lineage>
</organism>
<gene>
    <name type="primary">Cdc7</name>
    <name type="synonym">Cdc7l1</name>
</gene>